<name>RUVC_VIBA3</name>
<accession>B7VMI1</accession>
<proteinExistence type="inferred from homology"/>
<organism>
    <name type="scientific">Vibrio atlanticus (strain LGP32)</name>
    <name type="common">Vibrio splendidus (strain Mel32)</name>
    <dbReference type="NCBI Taxonomy" id="575788"/>
    <lineage>
        <taxon>Bacteria</taxon>
        <taxon>Pseudomonadati</taxon>
        <taxon>Pseudomonadota</taxon>
        <taxon>Gammaproteobacteria</taxon>
        <taxon>Vibrionales</taxon>
        <taxon>Vibrionaceae</taxon>
        <taxon>Vibrio</taxon>
    </lineage>
</organism>
<dbReference type="EC" id="3.1.21.10" evidence="1"/>
<dbReference type="EMBL" id="FM954972">
    <property type="protein sequence ID" value="CAV18231.1"/>
    <property type="molecule type" value="Genomic_DNA"/>
</dbReference>
<dbReference type="SMR" id="B7VMI1"/>
<dbReference type="STRING" id="575788.VS_1105"/>
<dbReference type="KEGG" id="vsp:VS_1105"/>
<dbReference type="eggNOG" id="COG0817">
    <property type="taxonomic scope" value="Bacteria"/>
</dbReference>
<dbReference type="HOGENOM" id="CLU_091257_2_1_6"/>
<dbReference type="Proteomes" id="UP000009100">
    <property type="component" value="Chromosome 1"/>
</dbReference>
<dbReference type="GO" id="GO:0005737">
    <property type="term" value="C:cytoplasm"/>
    <property type="evidence" value="ECO:0007669"/>
    <property type="project" value="UniProtKB-SubCell"/>
</dbReference>
<dbReference type="GO" id="GO:0048476">
    <property type="term" value="C:Holliday junction resolvase complex"/>
    <property type="evidence" value="ECO:0007669"/>
    <property type="project" value="UniProtKB-UniRule"/>
</dbReference>
<dbReference type="GO" id="GO:0008821">
    <property type="term" value="F:crossover junction DNA endonuclease activity"/>
    <property type="evidence" value="ECO:0007669"/>
    <property type="project" value="UniProtKB-UniRule"/>
</dbReference>
<dbReference type="GO" id="GO:0003677">
    <property type="term" value="F:DNA binding"/>
    <property type="evidence" value="ECO:0007669"/>
    <property type="project" value="UniProtKB-KW"/>
</dbReference>
<dbReference type="GO" id="GO:0000287">
    <property type="term" value="F:magnesium ion binding"/>
    <property type="evidence" value="ECO:0007669"/>
    <property type="project" value="UniProtKB-UniRule"/>
</dbReference>
<dbReference type="GO" id="GO:0006310">
    <property type="term" value="P:DNA recombination"/>
    <property type="evidence" value="ECO:0007669"/>
    <property type="project" value="UniProtKB-UniRule"/>
</dbReference>
<dbReference type="GO" id="GO:0006281">
    <property type="term" value="P:DNA repair"/>
    <property type="evidence" value="ECO:0007669"/>
    <property type="project" value="UniProtKB-UniRule"/>
</dbReference>
<dbReference type="CDD" id="cd16962">
    <property type="entry name" value="RuvC"/>
    <property type="match status" value="1"/>
</dbReference>
<dbReference type="FunFam" id="3.30.420.10:FF:000002">
    <property type="entry name" value="Crossover junction endodeoxyribonuclease RuvC"/>
    <property type="match status" value="1"/>
</dbReference>
<dbReference type="Gene3D" id="3.30.420.10">
    <property type="entry name" value="Ribonuclease H-like superfamily/Ribonuclease H"/>
    <property type="match status" value="1"/>
</dbReference>
<dbReference type="HAMAP" id="MF_00034">
    <property type="entry name" value="RuvC"/>
    <property type="match status" value="1"/>
</dbReference>
<dbReference type="InterPro" id="IPR012337">
    <property type="entry name" value="RNaseH-like_sf"/>
</dbReference>
<dbReference type="InterPro" id="IPR036397">
    <property type="entry name" value="RNaseH_sf"/>
</dbReference>
<dbReference type="InterPro" id="IPR002176">
    <property type="entry name" value="X-over_junc_endoDNase_RuvC"/>
</dbReference>
<dbReference type="NCBIfam" id="TIGR00228">
    <property type="entry name" value="ruvC"/>
    <property type="match status" value="1"/>
</dbReference>
<dbReference type="PANTHER" id="PTHR30194">
    <property type="entry name" value="CROSSOVER JUNCTION ENDODEOXYRIBONUCLEASE RUVC"/>
    <property type="match status" value="1"/>
</dbReference>
<dbReference type="PANTHER" id="PTHR30194:SF3">
    <property type="entry name" value="CROSSOVER JUNCTION ENDODEOXYRIBONUCLEASE RUVC"/>
    <property type="match status" value="1"/>
</dbReference>
<dbReference type="Pfam" id="PF02075">
    <property type="entry name" value="RuvC"/>
    <property type="match status" value="1"/>
</dbReference>
<dbReference type="PRINTS" id="PR00696">
    <property type="entry name" value="RSOLVASERUVC"/>
</dbReference>
<dbReference type="SUPFAM" id="SSF53098">
    <property type="entry name" value="Ribonuclease H-like"/>
    <property type="match status" value="1"/>
</dbReference>
<comment type="function">
    <text evidence="1">The RuvA-RuvB-RuvC complex processes Holliday junction (HJ) DNA during genetic recombination and DNA repair. Endonuclease that resolves HJ intermediates. Cleaves cruciform DNA by making single-stranded nicks across the HJ at symmetrical positions within the homologous arms, yielding a 5'-phosphate and a 3'-hydroxyl group; requires a central core of homology in the junction. The consensus cleavage sequence is 5'-(A/T)TT(C/G)-3'. Cleavage occurs on the 3'-side of the TT dinucleotide at the point of strand exchange. HJ branch migration catalyzed by RuvA-RuvB allows RuvC to scan DNA until it finds its consensus sequence, where it cleaves and resolves the cruciform DNA.</text>
</comment>
<comment type="catalytic activity">
    <reaction evidence="1">
        <text>Endonucleolytic cleavage at a junction such as a reciprocal single-stranded crossover between two homologous DNA duplexes (Holliday junction).</text>
        <dbReference type="EC" id="3.1.21.10"/>
    </reaction>
</comment>
<comment type="cofactor">
    <cofactor evidence="1">
        <name>Mg(2+)</name>
        <dbReference type="ChEBI" id="CHEBI:18420"/>
    </cofactor>
    <text evidence="1">Binds 2 Mg(2+) ion per subunit.</text>
</comment>
<comment type="subunit">
    <text evidence="1">Homodimer which binds Holliday junction (HJ) DNA. The HJ becomes 2-fold symmetrical on binding to RuvC with unstacked arms; it has a different conformation from HJ DNA in complex with RuvA. In the full resolvosome a probable DNA-RuvA(4)-RuvB(12)-RuvC(2) complex forms which resolves the HJ.</text>
</comment>
<comment type="subcellular location">
    <subcellularLocation>
        <location evidence="1">Cytoplasm</location>
    </subcellularLocation>
</comment>
<comment type="similarity">
    <text evidence="1">Belongs to the RuvC family.</text>
</comment>
<sequence length="173" mass="18355">MSIILGIDPGSRITGYGVIRQNGRHLYYLGSGCIRTSEKELPGRLKQIYAGVSEIITQFQPDVFAIEQVFMSKNADSALKLGQARGSAIVAAVNADLPVHEYAARLIKQAVTGNGGADKSMVQNMVMSMLKLPAKPQADAADALGVAITHANTNKTLVALAGKATGARKGRYR</sequence>
<reference key="1">
    <citation type="submission" date="2009-02" db="EMBL/GenBank/DDBJ databases">
        <title>Vibrio splendidus str. LGP32 complete genome.</title>
        <authorList>
            <person name="Mazel D."/>
            <person name="Le Roux F."/>
        </authorList>
    </citation>
    <scope>NUCLEOTIDE SEQUENCE [LARGE SCALE GENOMIC DNA]</scope>
    <source>
        <strain>LGP32</strain>
    </source>
</reference>
<keyword id="KW-0963">Cytoplasm</keyword>
<keyword id="KW-0227">DNA damage</keyword>
<keyword id="KW-0233">DNA recombination</keyword>
<keyword id="KW-0234">DNA repair</keyword>
<keyword id="KW-0238">DNA-binding</keyword>
<keyword id="KW-0255">Endonuclease</keyword>
<keyword id="KW-0378">Hydrolase</keyword>
<keyword id="KW-0460">Magnesium</keyword>
<keyword id="KW-0479">Metal-binding</keyword>
<keyword id="KW-0540">Nuclease</keyword>
<protein>
    <recommendedName>
        <fullName evidence="1">Crossover junction endodeoxyribonuclease RuvC</fullName>
        <ecNumber evidence="1">3.1.21.10</ecNumber>
    </recommendedName>
    <alternativeName>
        <fullName evidence="1">Holliday junction nuclease RuvC</fullName>
    </alternativeName>
    <alternativeName>
        <fullName evidence="1">Holliday junction resolvase RuvC</fullName>
    </alternativeName>
</protein>
<feature type="chain" id="PRO_1000195277" description="Crossover junction endodeoxyribonuclease RuvC">
    <location>
        <begin position="1"/>
        <end position="173"/>
    </location>
</feature>
<feature type="active site" evidence="1">
    <location>
        <position position="8"/>
    </location>
</feature>
<feature type="active site" evidence="1">
    <location>
        <position position="67"/>
    </location>
</feature>
<feature type="active site" evidence="1">
    <location>
        <position position="139"/>
    </location>
</feature>
<feature type="binding site" evidence="1">
    <location>
        <position position="8"/>
    </location>
    <ligand>
        <name>Mg(2+)</name>
        <dbReference type="ChEBI" id="CHEBI:18420"/>
        <label>1</label>
    </ligand>
</feature>
<feature type="binding site" evidence="1">
    <location>
        <position position="67"/>
    </location>
    <ligand>
        <name>Mg(2+)</name>
        <dbReference type="ChEBI" id="CHEBI:18420"/>
        <label>2</label>
    </ligand>
</feature>
<feature type="binding site" evidence="1">
    <location>
        <position position="139"/>
    </location>
    <ligand>
        <name>Mg(2+)</name>
        <dbReference type="ChEBI" id="CHEBI:18420"/>
        <label>1</label>
    </ligand>
</feature>
<gene>
    <name evidence="1" type="primary">ruvC</name>
    <name type="ordered locus">VS_1105</name>
</gene>
<evidence type="ECO:0000255" key="1">
    <source>
        <dbReference type="HAMAP-Rule" id="MF_00034"/>
    </source>
</evidence>